<geneLocation type="plasmid"/>
<sequence length="107" mass="11996">MIPGEIKVNHALGDIELNAGRETQTIQVANHGDRPIQIGSHYHFYEVNDALKFERENTLGFRLNIPAGMAVRFEPGQSRTVELVAFSGKREIYGFHGKVMGKLESEN</sequence>
<keyword id="KW-0963">Cytoplasm</keyword>
<keyword id="KW-0378">Hydrolase</keyword>
<keyword id="KW-0614">Plasmid</keyword>
<gene>
    <name evidence="1" type="primary">ureB</name>
</gene>
<comment type="catalytic activity">
    <reaction evidence="1">
        <text>urea + 2 H2O + H(+) = hydrogencarbonate + 2 NH4(+)</text>
        <dbReference type="Rhea" id="RHEA:20557"/>
        <dbReference type="ChEBI" id="CHEBI:15377"/>
        <dbReference type="ChEBI" id="CHEBI:15378"/>
        <dbReference type="ChEBI" id="CHEBI:16199"/>
        <dbReference type="ChEBI" id="CHEBI:17544"/>
        <dbReference type="ChEBI" id="CHEBI:28938"/>
        <dbReference type="EC" id="3.5.1.5"/>
    </reaction>
</comment>
<comment type="pathway">
    <text evidence="1">Nitrogen metabolism; urea degradation; CO(2) and NH(3) from urea (urease route): step 1/1.</text>
</comment>
<comment type="subunit">
    <text evidence="1">Heterotrimer of UreA (gamma), UreB (beta) and UreC (alpha) subunits. Three heterotrimers associate to form the active enzyme.</text>
</comment>
<comment type="subcellular location">
    <subcellularLocation>
        <location evidence="1">Cytoplasm</location>
    </subcellularLocation>
</comment>
<comment type="induction">
    <text evidence="2">The probable operon is induced by urea.</text>
</comment>
<comment type="similarity">
    <text evidence="1">Belongs to the urease beta subunit family.</text>
</comment>
<feature type="chain" id="PRO_0000067575" description="Urease subunit beta">
    <location>
        <begin position="1"/>
        <end position="107"/>
    </location>
</feature>
<name>URE2_ECOLX</name>
<dbReference type="EC" id="3.5.1.5" evidence="1"/>
<dbReference type="EMBL" id="L03307">
    <property type="protein sequence ID" value="AAA24746.1"/>
    <property type="molecule type" value="Genomic_DNA"/>
</dbReference>
<dbReference type="SMR" id="Q03283"/>
<dbReference type="BindingDB" id="Q03283"/>
<dbReference type="ChEMBL" id="CHEMBL2364683"/>
<dbReference type="DrugCentral" id="Q03283"/>
<dbReference type="UniPathway" id="UPA00258">
    <property type="reaction ID" value="UER00370"/>
</dbReference>
<dbReference type="GO" id="GO:0035550">
    <property type="term" value="C:urease complex"/>
    <property type="evidence" value="ECO:0007669"/>
    <property type="project" value="InterPro"/>
</dbReference>
<dbReference type="GO" id="GO:0009039">
    <property type="term" value="F:urease activity"/>
    <property type="evidence" value="ECO:0007669"/>
    <property type="project" value="UniProtKB-UniRule"/>
</dbReference>
<dbReference type="GO" id="GO:0043419">
    <property type="term" value="P:urea catabolic process"/>
    <property type="evidence" value="ECO:0007669"/>
    <property type="project" value="UniProtKB-UniRule"/>
</dbReference>
<dbReference type="CDD" id="cd00407">
    <property type="entry name" value="Urease_beta"/>
    <property type="match status" value="1"/>
</dbReference>
<dbReference type="FunFam" id="2.10.150.10:FF:000001">
    <property type="entry name" value="Urease subunit beta"/>
    <property type="match status" value="1"/>
</dbReference>
<dbReference type="Gene3D" id="2.10.150.10">
    <property type="entry name" value="Urease, beta subunit"/>
    <property type="match status" value="1"/>
</dbReference>
<dbReference type="HAMAP" id="MF_01954">
    <property type="entry name" value="Urease_beta"/>
    <property type="match status" value="1"/>
</dbReference>
<dbReference type="InterPro" id="IPR002019">
    <property type="entry name" value="Urease_beta-like"/>
</dbReference>
<dbReference type="InterPro" id="IPR036461">
    <property type="entry name" value="Urease_betasu_sf"/>
</dbReference>
<dbReference type="InterPro" id="IPR050069">
    <property type="entry name" value="Urease_subunit"/>
</dbReference>
<dbReference type="NCBIfam" id="NF009682">
    <property type="entry name" value="PRK13203.1"/>
    <property type="match status" value="1"/>
</dbReference>
<dbReference type="NCBIfam" id="TIGR00192">
    <property type="entry name" value="urease_beta"/>
    <property type="match status" value="1"/>
</dbReference>
<dbReference type="PANTHER" id="PTHR33569">
    <property type="entry name" value="UREASE"/>
    <property type="match status" value="1"/>
</dbReference>
<dbReference type="PANTHER" id="PTHR33569:SF1">
    <property type="entry name" value="UREASE"/>
    <property type="match status" value="1"/>
</dbReference>
<dbReference type="Pfam" id="PF00699">
    <property type="entry name" value="Urease_beta"/>
    <property type="match status" value="1"/>
</dbReference>
<dbReference type="SUPFAM" id="SSF51278">
    <property type="entry name" value="Urease, beta-subunit"/>
    <property type="match status" value="1"/>
</dbReference>
<organism>
    <name type="scientific">Escherichia coli</name>
    <dbReference type="NCBI Taxonomy" id="562"/>
    <lineage>
        <taxon>Bacteria</taxon>
        <taxon>Pseudomonadati</taxon>
        <taxon>Pseudomonadota</taxon>
        <taxon>Gammaproteobacteria</taxon>
        <taxon>Enterobacterales</taxon>
        <taxon>Enterobacteriaceae</taxon>
        <taxon>Escherichia</taxon>
    </lineage>
</organism>
<proteinExistence type="evidence at transcript level"/>
<reference key="1">
    <citation type="journal article" date="1993" name="J. Bacteriol.">
        <title>Characterization of a plasmid-encoded urease gene cluster found in members of the family Enterobacteriaceae.</title>
        <authorList>
            <person name="D'Orazio S.E."/>
            <person name="Collins C.M."/>
        </authorList>
    </citation>
    <scope>NUCLEOTIDE SEQUENCE [GENOMIC DNA]</scope>
    <scope>INDUCTION</scope>
    <source>
        <strain>1440 / UPEC</strain>
    </source>
</reference>
<protein>
    <recommendedName>
        <fullName evidence="1">Urease subunit beta</fullName>
        <ecNumber evidence="1">3.5.1.5</ecNumber>
    </recommendedName>
    <alternativeName>
        <fullName evidence="1">Urea amidohydrolase subunit beta</fullName>
    </alternativeName>
</protein>
<evidence type="ECO:0000255" key="1">
    <source>
        <dbReference type="HAMAP-Rule" id="MF_01954"/>
    </source>
</evidence>
<evidence type="ECO:0000269" key="2">
    <source>
    </source>
</evidence>
<accession>Q03283</accession>